<organism>
    <name type="scientific">Burkholderia thailandensis (strain ATCC 700388 / DSM 13276 / CCUG 48851 / CIP 106301 / E264)</name>
    <dbReference type="NCBI Taxonomy" id="271848"/>
    <lineage>
        <taxon>Bacteria</taxon>
        <taxon>Pseudomonadati</taxon>
        <taxon>Pseudomonadota</taxon>
        <taxon>Betaproteobacteria</taxon>
        <taxon>Burkholderiales</taxon>
        <taxon>Burkholderiaceae</taxon>
        <taxon>Burkholderia</taxon>
        <taxon>pseudomallei group</taxon>
    </lineage>
</organism>
<reference key="1">
    <citation type="journal article" date="2005" name="BMC Genomics">
        <title>Bacterial genome adaptation to niches: divergence of the potential virulence genes in three Burkholderia species of different survival strategies.</title>
        <authorList>
            <person name="Kim H.S."/>
            <person name="Schell M.A."/>
            <person name="Yu Y."/>
            <person name="Ulrich R.L."/>
            <person name="Sarria S.H."/>
            <person name="Nierman W.C."/>
            <person name="DeShazer D."/>
        </authorList>
    </citation>
    <scope>NUCLEOTIDE SEQUENCE [LARGE SCALE GENOMIC DNA]</scope>
    <source>
        <strain>ATCC 700388 / DSM 13276 / CCUG 48851 / CIP 106301 / E264</strain>
    </source>
</reference>
<protein>
    <recommendedName>
        <fullName evidence="1">Phosphoglucosamine mutase</fullName>
        <ecNumber evidence="1">5.4.2.10</ecNumber>
    </recommendedName>
</protein>
<comment type="function">
    <text evidence="1">Catalyzes the conversion of glucosamine-6-phosphate to glucosamine-1-phosphate.</text>
</comment>
<comment type="catalytic activity">
    <reaction evidence="1">
        <text>alpha-D-glucosamine 1-phosphate = D-glucosamine 6-phosphate</text>
        <dbReference type="Rhea" id="RHEA:23424"/>
        <dbReference type="ChEBI" id="CHEBI:58516"/>
        <dbReference type="ChEBI" id="CHEBI:58725"/>
        <dbReference type="EC" id="5.4.2.10"/>
    </reaction>
</comment>
<comment type="cofactor">
    <cofactor evidence="1">
        <name>Mg(2+)</name>
        <dbReference type="ChEBI" id="CHEBI:18420"/>
    </cofactor>
    <text evidence="1">Binds 1 Mg(2+) ion per subunit.</text>
</comment>
<comment type="PTM">
    <text evidence="1">Activated by phosphorylation.</text>
</comment>
<comment type="similarity">
    <text evidence="1">Belongs to the phosphohexose mutase family.</text>
</comment>
<accession>Q2SUW3</accession>
<dbReference type="EC" id="5.4.2.10" evidence="1"/>
<dbReference type="EMBL" id="CP000086">
    <property type="protein sequence ID" value="ABC38307.1"/>
    <property type="molecule type" value="Genomic_DNA"/>
</dbReference>
<dbReference type="RefSeq" id="WP_009891906.1">
    <property type="nucleotide sequence ID" value="NZ_CP008785.1"/>
</dbReference>
<dbReference type="SMR" id="Q2SUW3"/>
<dbReference type="GeneID" id="45122471"/>
<dbReference type="KEGG" id="bte:BTH_I2774"/>
<dbReference type="HOGENOM" id="CLU_016950_7_0_4"/>
<dbReference type="Proteomes" id="UP000001930">
    <property type="component" value="Chromosome I"/>
</dbReference>
<dbReference type="GO" id="GO:0005829">
    <property type="term" value="C:cytosol"/>
    <property type="evidence" value="ECO:0007669"/>
    <property type="project" value="TreeGrafter"/>
</dbReference>
<dbReference type="GO" id="GO:0000287">
    <property type="term" value="F:magnesium ion binding"/>
    <property type="evidence" value="ECO:0007669"/>
    <property type="project" value="UniProtKB-UniRule"/>
</dbReference>
<dbReference type="GO" id="GO:0008966">
    <property type="term" value="F:phosphoglucosamine mutase activity"/>
    <property type="evidence" value="ECO:0007669"/>
    <property type="project" value="UniProtKB-UniRule"/>
</dbReference>
<dbReference type="GO" id="GO:0004615">
    <property type="term" value="F:phosphomannomutase activity"/>
    <property type="evidence" value="ECO:0007669"/>
    <property type="project" value="TreeGrafter"/>
</dbReference>
<dbReference type="GO" id="GO:0005975">
    <property type="term" value="P:carbohydrate metabolic process"/>
    <property type="evidence" value="ECO:0007669"/>
    <property type="project" value="InterPro"/>
</dbReference>
<dbReference type="GO" id="GO:0009252">
    <property type="term" value="P:peptidoglycan biosynthetic process"/>
    <property type="evidence" value="ECO:0007669"/>
    <property type="project" value="TreeGrafter"/>
</dbReference>
<dbReference type="GO" id="GO:0006048">
    <property type="term" value="P:UDP-N-acetylglucosamine biosynthetic process"/>
    <property type="evidence" value="ECO:0007669"/>
    <property type="project" value="TreeGrafter"/>
</dbReference>
<dbReference type="CDD" id="cd05802">
    <property type="entry name" value="GlmM"/>
    <property type="match status" value="1"/>
</dbReference>
<dbReference type="FunFam" id="3.30.310.50:FF:000001">
    <property type="entry name" value="Phosphoglucosamine mutase"/>
    <property type="match status" value="1"/>
</dbReference>
<dbReference type="FunFam" id="3.40.120.10:FF:000001">
    <property type="entry name" value="Phosphoglucosamine mutase"/>
    <property type="match status" value="1"/>
</dbReference>
<dbReference type="FunFam" id="3.40.120.10:FF:000003">
    <property type="entry name" value="Phosphoglucosamine mutase"/>
    <property type="match status" value="1"/>
</dbReference>
<dbReference type="Gene3D" id="3.40.120.10">
    <property type="entry name" value="Alpha-D-Glucose-1,6-Bisphosphate, subunit A, domain 3"/>
    <property type="match status" value="3"/>
</dbReference>
<dbReference type="Gene3D" id="3.30.310.50">
    <property type="entry name" value="Alpha-D-phosphohexomutase, C-terminal domain"/>
    <property type="match status" value="1"/>
</dbReference>
<dbReference type="HAMAP" id="MF_01554_B">
    <property type="entry name" value="GlmM_B"/>
    <property type="match status" value="1"/>
</dbReference>
<dbReference type="InterPro" id="IPR005844">
    <property type="entry name" value="A-D-PHexomutase_a/b/a-I"/>
</dbReference>
<dbReference type="InterPro" id="IPR016055">
    <property type="entry name" value="A-D-PHexomutase_a/b/a-I/II/III"/>
</dbReference>
<dbReference type="InterPro" id="IPR005845">
    <property type="entry name" value="A-D-PHexomutase_a/b/a-II"/>
</dbReference>
<dbReference type="InterPro" id="IPR005846">
    <property type="entry name" value="A-D-PHexomutase_a/b/a-III"/>
</dbReference>
<dbReference type="InterPro" id="IPR005843">
    <property type="entry name" value="A-D-PHexomutase_C"/>
</dbReference>
<dbReference type="InterPro" id="IPR036900">
    <property type="entry name" value="A-D-PHexomutase_C_sf"/>
</dbReference>
<dbReference type="InterPro" id="IPR016066">
    <property type="entry name" value="A-D-PHexomutase_CS"/>
</dbReference>
<dbReference type="InterPro" id="IPR005841">
    <property type="entry name" value="Alpha-D-phosphohexomutase_SF"/>
</dbReference>
<dbReference type="InterPro" id="IPR006352">
    <property type="entry name" value="GlmM_bact"/>
</dbReference>
<dbReference type="InterPro" id="IPR050060">
    <property type="entry name" value="Phosphoglucosamine_mutase"/>
</dbReference>
<dbReference type="NCBIfam" id="TIGR01455">
    <property type="entry name" value="glmM"/>
    <property type="match status" value="1"/>
</dbReference>
<dbReference type="NCBIfam" id="NF008139">
    <property type="entry name" value="PRK10887.1"/>
    <property type="match status" value="1"/>
</dbReference>
<dbReference type="PANTHER" id="PTHR42946:SF1">
    <property type="entry name" value="PHOSPHOGLUCOMUTASE (ALPHA-D-GLUCOSE-1,6-BISPHOSPHATE-DEPENDENT)"/>
    <property type="match status" value="1"/>
</dbReference>
<dbReference type="PANTHER" id="PTHR42946">
    <property type="entry name" value="PHOSPHOHEXOSE MUTASE"/>
    <property type="match status" value="1"/>
</dbReference>
<dbReference type="Pfam" id="PF02878">
    <property type="entry name" value="PGM_PMM_I"/>
    <property type="match status" value="1"/>
</dbReference>
<dbReference type="Pfam" id="PF02879">
    <property type="entry name" value="PGM_PMM_II"/>
    <property type="match status" value="1"/>
</dbReference>
<dbReference type="Pfam" id="PF02880">
    <property type="entry name" value="PGM_PMM_III"/>
    <property type="match status" value="1"/>
</dbReference>
<dbReference type="Pfam" id="PF00408">
    <property type="entry name" value="PGM_PMM_IV"/>
    <property type="match status" value="1"/>
</dbReference>
<dbReference type="PRINTS" id="PR00509">
    <property type="entry name" value="PGMPMM"/>
</dbReference>
<dbReference type="SUPFAM" id="SSF55957">
    <property type="entry name" value="Phosphoglucomutase, C-terminal domain"/>
    <property type="match status" value="1"/>
</dbReference>
<dbReference type="SUPFAM" id="SSF53738">
    <property type="entry name" value="Phosphoglucomutase, first 3 domains"/>
    <property type="match status" value="3"/>
</dbReference>
<dbReference type="PROSITE" id="PS00710">
    <property type="entry name" value="PGM_PMM"/>
    <property type="match status" value="1"/>
</dbReference>
<feature type="chain" id="PRO_0000301294" description="Phosphoglucosamine mutase">
    <location>
        <begin position="1"/>
        <end position="452"/>
    </location>
</feature>
<feature type="active site" description="Phosphoserine intermediate" evidence="1">
    <location>
        <position position="108"/>
    </location>
</feature>
<feature type="binding site" description="via phosphate group" evidence="1">
    <location>
        <position position="108"/>
    </location>
    <ligand>
        <name>Mg(2+)</name>
        <dbReference type="ChEBI" id="CHEBI:18420"/>
    </ligand>
</feature>
<feature type="binding site" evidence="1">
    <location>
        <position position="247"/>
    </location>
    <ligand>
        <name>Mg(2+)</name>
        <dbReference type="ChEBI" id="CHEBI:18420"/>
    </ligand>
</feature>
<feature type="binding site" evidence="1">
    <location>
        <position position="249"/>
    </location>
    <ligand>
        <name>Mg(2+)</name>
        <dbReference type="ChEBI" id="CHEBI:18420"/>
    </ligand>
</feature>
<feature type="binding site" evidence="1">
    <location>
        <position position="251"/>
    </location>
    <ligand>
        <name>Mg(2+)</name>
        <dbReference type="ChEBI" id="CHEBI:18420"/>
    </ligand>
</feature>
<feature type="modified residue" description="Phosphoserine" evidence="1">
    <location>
        <position position="108"/>
    </location>
</feature>
<proteinExistence type="inferred from homology"/>
<sequence>MGRRYFGTDGIRGKVGDAPITPDFVLRLGYAAGKVLASAPGRAASGARPTVLIGKDTRVSGYMLEAALEAGFSAAGVDVMLAGPMPTPGVAYLTRALRLSAGVVISASHNPYHDNGIKFFSADGNKLPDETEAEIEAWLDKSLDCAPSDGLGKARRLDDAAGRYIEFCKSTFPAAFDLRGMKLVVDCAHGAAYQVAPHVFHELGADVIPIGVAPNGFNINDGVGATAPDALMRAVRANHADLGIALDGDADRLLVVDHTGRLYNGDELLYVLVKDRIATNGQVEGAVGTLMTNLAVEVALKDAGVQFVRAAVGDRYVLEQLRERGWQLGAEGSGHILSLDRHSTGDGIVSALLVLAALKRSGKTLAQMLEGVTLFPQKLINVRMKPGADWKGSDAIRRAIGSAEQALAGSGRVLIRASGTEPVLRVMVEARHAADANHHAEAIADAVKQATA</sequence>
<keyword id="KW-0413">Isomerase</keyword>
<keyword id="KW-0460">Magnesium</keyword>
<keyword id="KW-0479">Metal-binding</keyword>
<keyword id="KW-0597">Phosphoprotein</keyword>
<name>GLMM_BURTA</name>
<gene>
    <name evidence="1" type="primary">glmM</name>
    <name type="ordered locus">BTH_I2774</name>
</gene>
<evidence type="ECO:0000255" key="1">
    <source>
        <dbReference type="HAMAP-Rule" id="MF_01554"/>
    </source>
</evidence>